<protein>
    <recommendedName>
        <fullName evidence="1">Anaerobic nitric oxide reductase flavorubredoxin</fullName>
        <shortName evidence="1">FlRd</shortName>
        <shortName evidence="1">FlavoRb</shortName>
    </recommendedName>
</protein>
<sequence>MSIVVKNNIHWVGQRDWEVRDFHGTEYKTLRGSSYNSYLIREEKNVLIDTVDHKFSREFVQNLRNEIDLADIDYIVINHAEEDHAGALTELMAQIPDTPIYCTANAIDSINGHHHHPEWNFNVVKTGDTLDIGNGKQLIFVETPMLHWPDSMMTYLTGDAVLFSNDAFGQHYCDEHLFNDEVDQTELFEQCQRYYANILTPFSRLVTPKITEILGFNLPVDMIATSHGVVWRDNPTQIVELYLKWAADYQEDRITIVYDTMSNNTRMMADAIAQGIAETDPRVAVKIFNVARSDKNEILTNVFRSKGVLVGTSTMNNVMMPKIAGLVEEMTGLRFRNKRASAFGSHGWSGGAVDRLSTRLQDAGFEMSLSLKAKWRPDQDALELCREHGREIARQWALAPLPQSTVNTVVEEETSAATTADLGPRMQCSVCQWIYDPAKGEPMQDVAPGTPWSEVPDNFLCPECSLGKDVFDELASEAK</sequence>
<accession>A1AEQ0</accession>
<reference key="1">
    <citation type="journal article" date="2007" name="J. Bacteriol.">
        <title>The genome sequence of avian pathogenic Escherichia coli strain O1:K1:H7 shares strong similarities with human extraintestinal pathogenic E. coli genomes.</title>
        <authorList>
            <person name="Johnson T.J."/>
            <person name="Kariyawasam S."/>
            <person name="Wannemuehler Y."/>
            <person name="Mangiamele P."/>
            <person name="Johnson S.J."/>
            <person name="Doetkott C."/>
            <person name="Skyberg J.A."/>
            <person name="Lynne A.M."/>
            <person name="Johnson J.R."/>
            <person name="Nolan L.K."/>
        </authorList>
    </citation>
    <scope>NUCLEOTIDE SEQUENCE [LARGE SCALE GENOMIC DNA]</scope>
</reference>
<name>NORV_ECOK1</name>
<proteinExistence type="inferred from homology"/>
<dbReference type="EMBL" id="CP000468">
    <property type="protein sequence ID" value="ABJ02140.1"/>
    <property type="molecule type" value="Genomic_DNA"/>
</dbReference>
<dbReference type="RefSeq" id="WP_000029638.1">
    <property type="nucleotide sequence ID" value="NZ_CADILS010000020.1"/>
</dbReference>
<dbReference type="BMRB" id="A1AEQ0"/>
<dbReference type="SMR" id="A1AEQ0"/>
<dbReference type="KEGG" id="ecv:APECO1_3816"/>
<dbReference type="HOGENOM" id="CLU_017490_0_1_6"/>
<dbReference type="UniPathway" id="UPA00638"/>
<dbReference type="Proteomes" id="UP000008216">
    <property type="component" value="Chromosome"/>
</dbReference>
<dbReference type="GO" id="GO:0005737">
    <property type="term" value="C:cytoplasm"/>
    <property type="evidence" value="ECO:0007669"/>
    <property type="project" value="UniProtKB-SubCell"/>
</dbReference>
<dbReference type="GO" id="GO:0009055">
    <property type="term" value="F:electron transfer activity"/>
    <property type="evidence" value="ECO:0007669"/>
    <property type="project" value="UniProtKB-UniRule"/>
</dbReference>
<dbReference type="GO" id="GO:0010181">
    <property type="term" value="F:FMN binding"/>
    <property type="evidence" value="ECO:0007669"/>
    <property type="project" value="InterPro"/>
</dbReference>
<dbReference type="GO" id="GO:0005506">
    <property type="term" value="F:iron ion binding"/>
    <property type="evidence" value="ECO:0007669"/>
    <property type="project" value="InterPro"/>
</dbReference>
<dbReference type="GO" id="GO:0016966">
    <property type="term" value="F:nitric oxide reductase activity"/>
    <property type="evidence" value="ECO:0007669"/>
    <property type="project" value="InterPro"/>
</dbReference>
<dbReference type="CDD" id="cd07709">
    <property type="entry name" value="flavodiiron_proteins_MBL-fold"/>
    <property type="match status" value="1"/>
</dbReference>
<dbReference type="CDD" id="cd00730">
    <property type="entry name" value="rubredoxin"/>
    <property type="match status" value="1"/>
</dbReference>
<dbReference type="FunFam" id="2.20.28.10:FF:000010">
    <property type="entry name" value="Anaerobic nitric oxide reductase flavorubredoxin"/>
    <property type="match status" value="1"/>
</dbReference>
<dbReference type="FunFam" id="3.40.50.360:FF:000012">
    <property type="entry name" value="Anaerobic nitric oxide reductase flavorubredoxin"/>
    <property type="match status" value="1"/>
</dbReference>
<dbReference type="FunFam" id="3.60.15.10:FF:000009">
    <property type="entry name" value="Anaerobic nitric oxide reductase flavorubredoxin"/>
    <property type="match status" value="1"/>
</dbReference>
<dbReference type="Gene3D" id="2.20.28.10">
    <property type="match status" value="1"/>
</dbReference>
<dbReference type="Gene3D" id="3.40.50.360">
    <property type="match status" value="1"/>
</dbReference>
<dbReference type="Gene3D" id="3.60.15.10">
    <property type="entry name" value="Ribonuclease Z/Hydroxyacylglutathione hydrolase-like"/>
    <property type="match status" value="1"/>
</dbReference>
<dbReference type="HAMAP" id="MF_01312">
    <property type="entry name" value="NorV"/>
    <property type="match status" value="1"/>
</dbReference>
<dbReference type="InterPro" id="IPR023957">
    <property type="entry name" value="Anaer_NO_rdtase_flvorubredoxin"/>
</dbReference>
<dbReference type="InterPro" id="IPR008254">
    <property type="entry name" value="Flavodoxin/NO_synth"/>
</dbReference>
<dbReference type="InterPro" id="IPR029039">
    <property type="entry name" value="Flavoprotein-like_sf"/>
</dbReference>
<dbReference type="InterPro" id="IPR001279">
    <property type="entry name" value="Metallo-B-lactamas"/>
</dbReference>
<dbReference type="InterPro" id="IPR045761">
    <property type="entry name" value="ODP_dom"/>
</dbReference>
<dbReference type="InterPro" id="IPR036866">
    <property type="entry name" value="RibonucZ/Hydroxyglut_hydro"/>
</dbReference>
<dbReference type="InterPro" id="IPR024934">
    <property type="entry name" value="Rubredoxin-like_dom"/>
</dbReference>
<dbReference type="InterPro" id="IPR016440">
    <property type="entry name" value="Rubredoxin-O_OxRdtase"/>
</dbReference>
<dbReference type="InterPro" id="IPR024935">
    <property type="entry name" value="Rubredoxin_dom"/>
</dbReference>
<dbReference type="NCBIfam" id="NF003954">
    <property type="entry name" value="PRK05452.1"/>
    <property type="match status" value="1"/>
</dbReference>
<dbReference type="PANTHER" id="PTHR43717">
    <property type="entry name" value="ANAEROBIC NITRIC OXIDE REDUCTASE FLAVORUBREDOXIN"/>
    <property type="match status" value="1"/>
</dbReference>
<dbReference type="PANTHER" id="PTHR43717:SF1">
    <property type="entry name" value="ANAEROBIC NITRIC OXIDE REDUCTASE FLAVORUBREDOXIN"/>
    <property type="match status" value="1"/>
</dbReference>
<dbReference type="Pfam" id="PF00258">
    <property type="entry name" value="Flavodoxin_1"/>
    <property type="match status" value="1"/>
</dbReference>
<dbReference type="Pfam" id="PF19583">
    <property type="entry name" value="ODP"/>
    <property type="match status" value="1"/>
</dbReference>
<dbReference type="Pfam" id="PF00301">
    <property type="entry name" value="Rubredoxin"/>
    <property type="match status" value="1"/>
</dbReference>
<dbReference type="PIRSF" id="PIRSF005243">
    <property type="entry name" value="ROO"/>
    <property type="match status" value="1"/>
</dbReference>
<dbReference type="PRINTS" id="PR00163">
    <property type="entry name" value="RUBREDOXIN"/>
</dbReference>
<dbReference type="SMART" id="SM00849">
    <property type="entry name" value="Lactamase_B"/>
    <property type="match status" value="1"/>
</dbReference>
<dbReference type="SUPFAM" id="SSF52218">
    <property type="entry name" value="Flavoproteins"/>
    <property type="match status" value="1"/>
</dbReference>
<dbReference type="SUPFAM" id="SSF56281">
    <property type="entry name" value="Metallo-hydrolase/oxidoreductase"/>
    <property type="match status" value="1"/>
</dbReference>
<dbReference type="SUPFAM" id="SSF57802">
    <property type="entry name" value="Rubredoxin-like"/>
    <property type="match status" value="1"/>
</dbReference>
<dbReference type="PROSITE" id="PS50902">
    <property type="entry name" value="FLAVODOXIN_LIKE"/>
    <property type="match status" value="1"/>
</dbReference>
<dbReference type="PROSITE" id="PS50903">
    <property type="entry name" value="RUBREDOXIN_LIKE"/>
    <property type="match status" value="1"/>
</dbReference>
<evidence type="ECO:0000255" key="1">
    <source>
        <dbReference type="HAMAP-Rule" id="MF_01312"/>
    </source>
</evidence>
<keyword id="KW-0963">Cytoplasm</keyword>
<keyword id="KW-0249">Electron transport</keyword>
<keyword id="KW-0285">Flavoprotein</keyword>
<keyword id="KW-0288">FMN</keyword>
<keyword id="KW-0408">Iron</keyword>
<keyword id="KW-0479">Metal-binding</keyword>
<keyword id="KW-0560">Oxidoreductase</keyword>
<keyword id="KW-1185">Reference proteome</keyword>
<keyword id="KW-0813">Transport</keyword>
<organism>
    <name type="scientific">Escherichia coli O1:K1 / APEC</name>
    <dbReference type="NCBI Taxonomy" id="405955"/>
    <lineage>
        <taxon>Bacteria</taxon>
        <taxon>Pseudomonadati</taxon>
        <taxon>Pseudomonadota</taxon>
        <taxon>Gammaproteobacteria</taxon>
        <taxon>Enterobacterales</taxon>
        <taxon>Enterobacteriaceae</taxon>
        <taxon>Escherichia</taxon>
    </lineage>
</organism>
<feature type="chain" id="PRO_0000305593" description="Anaerobic nitric oxide reductase flavorubredoxin">
    <location>
        <begin position="1"/>
        <end position="479"/>
    </location>
</feature>
<feature type="domain" description="Flavodoxin-like" evidence="1">
    <location>
        <begin position="254"/>
        <end position="393"/>
    </location>
</feature>
<feature type="domain" description="Rubredoxin-like" evidence="1">
    <location>
        <begin position="423"/>
        <end position="474"/>
    </location>
</feature>
<feature type="region of interest" description="Zinc metallo-hydrolase">
    <location>
        <begin position="30"/>
        <end position="210"/>
    </location>
</feature>
<feature type="binding site" evidence="1">
    <location>
        <position position="79"/>
    </location>
    <ligand>
        <name>Fe cation</name>
        <dbReference type="ChEBI" id="CHEBI:24875"/>
        <label>1</label>
    </ligand>
</feature>
<feature type="binding site" evidence="1">
    <location>
        <position position="81"/>
    </location>
    <ligand>
        <name>Fe cation</name>
        <dbReference type="ChEBI" id="CHEBI:24875"/>
        <label>1</label>
    </ligand>
</feature>
<feature type="binding site" evidence="1">
    <location>
        <position position="83"/>
    </location>
    <ligand>
        <name>Fe cation</name>
        <dbReference type="ChEBI" id="CHEBI:24875"/>
        <label>2</label>
    </ligand>
</feature>
<feature type="binding site" evidence="1">
    <location>
        <position position="147"/>
    </location>
    <ligand>
        <name>Fe cation</name>
        <dbReference type="ChEBI" id="CHEBI:24875"/>
        <label>1</label>
    </ligand>
</feature>
<feature type="binding site" evidence="1">
    <location>
        <position position="166"/>
    </location>
    <ligand>
        <name>Fe cation</name>
        <dbReference type="ChEBI" id="CHEBI:24875"/>
        <label>1</label>
    </ligand>
</feature>
<feature type="binding site" evidence="1">
    <location>
        <position position="166"/>
    </location>
    <ligand>
        <name>Fe cation</name>
        <dbReference type="ChEBI" id="CHEBI:24875"/>
        <label>2</label>
    </ligand>
</feature>
<feature type="binding site" evidence="1">
    <location>
        <position position="227"/>
    </location>
    <ligand>
        <name>Fe cation</name>
        <dbReference type="ChEBI" id="CHEBI:24875"/>
        <label>2</label>
    </ligand>
</feature>
<feature type="binding site" evidence="1">
    <location>
        <begin position="260"/>
        <end position="264"/>
    </location>
    <ligand>
        <name>FMN</name>
        <dbReference type="ChEBI" id="CHEBI:58210"/>
    </ligand>
</feature>
<feature type="binding site" evidence="1">
    <location>
        <begin position="342"/>
        <end position="369"/>
    </location>
    <ligand>
        <name>FMN</name>
        <dbReference type="ChEBI" id="CHEBI:58210"/>
    </ligand>
</feature>
<feature type="binding site" evidence="1">
    <location>
        <position position="428"/>
    </location>
    <ligand>
        <name>Fe cation</name>
        <dbReference type="ChEBI" id="CHEBI:24875"/>
        <label>3</label>
    </ligand>
</feature>
<feature type="binding site" evidence="1">
    <location>
        <position position="431"/>
    </location>
    <ligand>
        <name>Fe cation</name>
        <dbReference type="ChEBI" id="CHEBI:24875"/>
        <label>3</label>
    </ligand>
</feature>
<feature type="binding site" evidence="1">
    <location>
        <position position="461"/>
    </location>
    <ligand>
        <name>Fe cation</name>
        <dbReference type="ChEBI" id="CHEBI:24875"/>
        <label>3</label>
    </ligand>
</feature>
<feature type="binding site" evidence="1">
    <location>
        <position position="464"/>
    </location>
    <ligand>
        <name>Fe cation</name>
        <dbReference type="ChEBI" id="CHEBI:24875"/>
        <label>3</label>
    </ligand>
</feature>
<comment type="function">
    <text evidence="1">Anaerobic nitric oxide reductase; uses NADH to detoxify nitric oxide (NO), protecting several 4Fe-4S NO-sensitive enzymes. Has at least 2 reductase partners, only one of which (NorW, flavorubredoxin reductase) has been identified. NO probably binds to the di-iron center; electrons enter from the NorW at rubredoxin and are transferred sequentially to the FMN center and the di-iron center. Also able to function as an aerobic oxygen reductase.</text>
</comment>
<comment type="cofactor">
    <cofactor evidence="1">
        <name>Fe cation</name>
        <dbReference type="ChEBI" id="CHEBI:24875"/>
    </cofactor>
    <text evidence="1">Binds 3 Fe cations per monomer.</text>
</comment>
<comment type="cofactor">
    <cofactor evidence="1">
        <name>FMN</name>
        <dbReference type="ChEBI" id="CHEBI:58210"/>
    </cofactor>
    <text evidence="1">Binds 1 FMN per monomer.</text>
</comment>
<comment type="pathway">
    <text evidence="1">Nitrogen metabolism; nitric oxide reduction.</text>
</comment>
<comment type="subunit">
    <text evidence="1">Homotetramer.</text>
</comment>
<comment type="subcellular location">
    <subcellularLocation>
        <location evidence="1">Cytoplasm</location>
    </subcellularLocation>
</comment>
<comment type="similarity">
    <text evidence="1">In the N-terminal section; belongs to the zinc metallo-hydrolase group 3 family.</text>
</comment>
<gene>
    <name evidence="1" type="primary">norV</name>
    <name evidence="1" type="synonym">flrD</name>
    <name type="ordered locus">Ecok1_26460</name>
    <name type="ORF">APECO1_3816</name>
</gene>